<keyword id="KW-1003">Cell membrane</keyword>
<keyword id="KW-0961">Cell wall biogenesis/degradation</keyword>
<keyword id="KW-0472">Membrane</keyword>
<keyword id="KW-1185">Reference proteome</keyword>
<keyword id="KW-0735">Signal-anchor</keyword>
<keyword id="KW-0812">Transmembrane</keyword>
<keyword id="KW-1133">Transmembrane helix</keyword>
<proteinExistence type="inferred from homology"/>
<organism>
    <name type="scientific">Zygosaccharomyces rouxii (strain ATCC 2623 / CBS 732 / NBRC 1130 / NCYC 568 / NRRL Y-229)</name>
    <dbReference type="NCBI Taxonomy" id="559307"/>
    <lineage>
        <taxon>Eukaryota</taxon>
        <taxon>Fungi</taxon>
        <taxon>Dikarya</taxon>
        <taxon>Ascomycota</taxon>
        <taxon>Saccharomycotina</taxon>
        <taxon>Saccharomycetes</taxon>
        <taxon>Saccharomycetales</taxon>
        <taxon>Saccharomycetaceae</taxon>
        <taxon>Zygosaccharomyces</taxon>
    </lineage>
</organism>
<accession>C5DSG3</accession>
<feature type="chain" id="PRO_0000399677" description="Suppressor of lethality of KEX2 GAS1 double null mutant protein 1">
    <location>
        <begin position="1"/>
        <end position="334"/>
    </location>
</feature>
<feature type="topological domain" description="Extracellular" evidence="2">
    <location>
        <begin position="1"/>
        <end position="7"/>
    </location>
</feature>
<feature type="transmembrane region" description="Helical; Signal-anchor for type III membrane protein" evidence="2">
    <location>
        <begin position="8"/>
        <end position="28"/>
    </location>
</feature>
<feature type="topological domain" description="Cytoplasmic" evidence="2">
    <location>
        <begin position="29"/>
        <end position="334"/>
    </location>
</feature>
<feature type="region of interest" description="Disordered" evidence="3">
    <location>
        <begin position="76"/>
        <end position="110"/>
    </location>
</feature>
<feature type="region of interest" description="Disordered" evidence="3">
    <location>
        <begin position="204"/>
        <end position="248"/>
    </location>
</feature>
<feature type="compositionally biased region" description="Low complexity" evidence="3">
    <location>
        <begin position="81"/>
        <end position="96"/>
    </location>
</feature>
<feature type="compositionally biased region" description="Polar residues" evidence="3">
    <location>
        <begin position="204"/>
        <end position="217"/>
    </location>
</feature>
<feature type="compositionally biased region" description="Low complexity" evidence="3">
    <location>
        <begin position="218"/>
        <end position="248"/>
    </location>
</feature>
<gene>
    <name type="primary">SKG1</name>
    <name type="ordered locus">ZYRO0B16632g</name>
</gene>
<dbReference type="EMBL" id="CU928174">
    <property type="protein sequence ID" value="CAR26724.1"/>
    <property type="molecule type" value="Genomic_DNA"/>
</dbReference>
<dbReference type="RefSeq" id="XP_002495657.1">
    <property type="nucleotide sequence ID" value="XM_002495612.1"/>
</dbReference>
<dbReference type="SMR" id="C5DSG3"/>
<dbReference type="FunCoup" id="C5DSG3">
    <property type="interactions" value="22"/>
</dbReference>
<dbReference type="GeneID" id="8202832"/>
<dbReference type="KEGG" id="zro:ZYRO0B16632g"/>
<dbReference type="HOGENOM" id="CLU_079389_0_0_1"/>
<dbReference type="InParanoid" id="C5DSG3"/>
<dbReference type="Proteomes" id="UP000008536">
    <property type="component" value="Chromosome B"/>
</dbReference>
<dbReference type="GO" id="GO:0033101">
    <property type="term" value="C:cellular bud membrane"/>
    <property type="evidence" value="ECO:0007669"/>
    <property type="project" value="UniProtKB-SubCell"/>
</dbReference>
<dbReference type="GO" id="GO:0071555">
    <property type="term" value="P:cell wall organization"/>
    <property type="evidence" value="ECO:0007669"/>
    <property type="project" value="UniProtKB-KW"/>
</dbReference>
<evidence type="ECO:0000250" key="1"/>
<evidence type="ECO:0000255" key="2"/>
<evidence type="ECO:0000256" key="3">
    <source>
        <dbReference type="SAM" id="MobiDB-lite"/>
    </source>
</evidence>
<evidence type="ECO:0000305" key="4"/>
<sequence length="334" mass="37761">MGDVSIAVGCAVGLPVGLSFLLAIVFWIRMQRRYKKEDARDCELENIIRDESGFISFDNLGTWQETQQEKKDVYVNDESVESSGIQGSSSSEQLQQPNETHQNKHQSKHYMPAYRRNLNAYRIRQLPTGINVDNNGSNLSLDSTQNMRKRPNLHQETVYDQMIPVLANTEPKLFSEDNNEQDTAATIQQNQQNNEKVIMKNLRNNDFGSYPRGTQSATSLSRSNSNSNTNTNTNVSRSSLHTRSSSVMSAVKGTTSYDNVFDTPKSATAASLVDVKVSNNNNNNNKQPVYSLKNNYDIKNTSEIQEEDQYENEFTNYSESKRTFIDSLRPKPGI</sequence>
<name>SKG1_ZYGRC</name>
<comment type="function">
    <text evidence="1">Plays a role in cell wall integrity. Affects the cell wall polymer composition in the growing region of the cell (By similarity).</text>
</comment>
<comment type="subcellular location">
    <subcellularLocation>
        <location evidence="1">Cell membrane</location>
        <topology evidence="1">Single-pass type III membrane protein</topology>
        <orientation evidence="1">Cytoplasmic side</orientation>
    </subcellularLocation>
    <subcellularLocation>
        <location evidence="1">Bud membrane</location>
        <topology evidence="1">Single-pass type III membrane protein</topology>
        <orientation evidence="1">Cytoplasmic side</orientation>
    </subcellularLocation>
    <text evidence="1">Localizes on the inner surface of the plasma membrane at the bud and in the daughter cell. Localizes at an incipient bud site in the cells with emerging buds, a bud tip in small- or medium-budded cells, and a cell periphery in large-budded cells.</text>
</comment>
<comment type="similarity">
    <text evidence="4">Belongs to the SKG1 family.</text>
</comment>
<protein>
    <recommendedName>
        <fullName>Suppressor of lethality of KEX2 GAS1 double null mutant protein 1</fullName>
    </recommendedName>
</protein>
<reference key="1">
    <citation type="journal article" date="2009" name="Genome Res.">
        <title>Comparative genomics of protoploid Saccharomycetaceae.</title>
        <authorList>
            <consortium name="The Genolevures Consortium"/>
            <person name="Souciet J.-L."/>
            <person name="Dujon B."/>
            <person name="Gaillardin C."/>
            <person name="Johnston M."/>
            <person name="Baret P.V."/>
            <person name="Cliften P."/>
            <person name="Sherman D.J."/>
            <person name="Weissenbach J."/>
            <person name="Westhof E."/>
            <person name="Wincker P."/>
            <person name="Jubin C."/>
            <person name="Poulain J."/>
            <person name="Barbe V."/>
            <person name="Segurens B."/>
            <person name="Artiguenave F."/>
            <person name="Anthouard V."/>
            <person name="Vacherie B."/>
            <person name="Val M.-E."/>
            <person name="Fulton R.S."/>
            <person name="Minx P."/>
            <person name="Wilson R."/>
            <person name="Durrens P."/>
            <person name="Jean G."/>
            <person name="Marck C."/>
            <person name="Martin T."/>
            <person name="Nikolski M."/>
            <person name="Rolland T."/>
            <person name="Seret M.-L."/>
            <person name="Casaregola S."/>
            <person name="Despons L."/>
            <person name="Fairhead C."/>
            <person name="Fischer G."/>
            <person name="Lafontaine I."/>
            <person name="Leh V."/>
            <person name="Lemaire M."/>
            <person name="de Montigny J."/>
            <person name="Neuveglise C."/>
            <person name="Thierry A."/>
            <person name="Blanc-Lenfle I."/>
            <person name="Bleykasten C."/>
            <person name="Diffels J."/>
            <person name="Fritsch E."/>
            <person name="Frangeul L."/>
            <person name="Goeffon A."/>
            <person name="Jauniaux N."/>
            <person name="Kachouri-Lafond R."/>
            <person name="Payen C."/>
            <person name="Potier S."/>
            <person name="Pribylova L."/>
            <person name="Ozanne C."/>
            <person name="Richard G.-F."/>
            <person name="Sacerdot C."/>
            <person name="Straub M.-L."/>
            <person name="Talla E."/>
        </authorList>
    </citation>
    <scope>NUCLEOTIDE SEQUENCE [LARGE SCALE GENOMIC DNA]</scope>
    <source>
        <strain>ATCC 2623 / CBS 732 / BCRC 21506 / NBRC 1130 / NCYC 568 / NRRL Y-229</strain>
    </source>
</reference>